<reference key="1">
    <citation type="journal article" date="2016" name="Open Biol.">
        <title>A single amino acid substitution in a chitinase of the legume Medicago truncatula is sufficient to gain Nod-factor hydrolase activity.</title>
        <authorList>
            <person name="Zhang L.Y."/>
            <person name="Cai J."/>
            <person name="Li R.J."/>
            <person name="Liu W."/>
            <person name="Wagner C."/>
            <person name="Wong K.B."/>
            <person name="Xie Z.P."/>
            <person name="Staehelin C."/>
        </authorList>
    </citation>
    <scope>NUCLEOTIDE SEQUENCE [MRNA] OF 33-397</scope>
    <scope>FUNCTION</scope>
    <scope>CATALYTIC ACTIVITY</scope>
    <scope>INDUCTION BY FUSARIUM OXYSPORUM</scope>
    <source>
        <strain>cv. Miyakojima MG-20</strain>
        <tissue>Root</tissue>
    </source>
</reference>
<reference key="2">
    <citation type="journal article" date="2018" name="Elife">
        <title>A plant chitinase controls cortical infection thread progression and nitrogen-fixing symbiosis.</title>
        <authorList>
            <person name="Malolepszy A."/>
            <person name="Kelly S."/>
            <person name="Soerensen K.K."/>
            <person name="James E.K."/>
            <person name="Kalisch C."/>
            <person name="Bozsoki Z."/>
            <person name="Panting M."/>
            <person name="Andersen S.U."/>
            <person name="Sato S."/>
            <person name="Tao K."/>
            <person name="Jensen D.B."/>
            <person name="Vinther M."/>
            <person name="Jong N."/>
            <person name="Madsen L.H."/>
            <person name="Umehara Y."/>
            <person name="Gysel K."/>
            <person name="Berentsen M.U."/>
            <person name="Blaise M."/>
            <person name="Jensen K.J."/>
            <person name="Thygesen M.B."/>
            <person name="Sandal N."/>
            <person name="Andersen K.R."/>
            <person name="Radutoiu S."/>
        </authorList>
    </citation>
    <scope>FUNCTION</scope>
    <scope>MUTAGENESIS OF GLU-166 AND PRO-168</scope>
    <scope>DISRUPTION PHENOTYPE</scope>
</reference>
<accession>A0A1B1J8Z2</accession>
<dbReference type="EC" id="3.2.1.14" evidence="5"/>
<dbReference type="EMBL" id="KU041645">
    <property type="protein sequence ID" value="ANS10044.1"/>
    <property type="molecule type" value="mRNA"/>
</dbReference>
<dbReference type="SMR" id="A0A1B1J8Z2"/>
<dbReference type="GlyCosmos" id="A0A1B1J8Z2">
    <property type="glycosylation" value="6 sites, No reported glycans"/>
</dbReference>
<dbReference type="OrthoDB" id="76388at2759"/>
<dbReference type="UniPathway" id="UPA00349"/>
<dbReference type="GO" id="GO:0005576">
    <property type="term" value="C:extracellular region"/>
    <property type="evidence" value="ECO:0007669"/>
    <property type="project" value="TreeGrafter"/>
</dbReference>
<dbReference type="GO" id="GO:0008061">
    <property type="term" value="F:chitin binding"/>
    <property type="evidence" value="ECO:0007669"/>
    <property type="project" value="InterPro"/>
</dbReference>
<dbReference type="GO" id="GO:0004568">
    <property type="term" value="F:chitinase activity"/>
    <property type="evidence" value="ECO:0000314"/>
    <property type="project" value="UniProtKB"/>
</dbReference>
<dbReference type="GO" id="GO:0008843">
    <property type="term" value="F:endochitinase activity"/>
    <property type="evidence" value="ECO:0007669"/>
    <property type="project" value="UniProtKB-EC"/>
</dbReference>
<dbReference type="GO" id="GO:0006032">
    <property type="term" value="P:chitin catabolic process"/>
    <property type="evidence" value="ECO:0000314"/>
    <property type="project" value="UniProtKB"/>
</dbReference>
<dbReference type="GO" id="GO:0050832">
    <property type="term" value="P:defense response to fungus"/>
    <property type="evidence" value="ECO:0000314"/>
    <property type="project" value="UniProtKB"/>
</dbReference>
<dbReference type="GO" id="GO:0009877">
    <property type="term" value="P:nodulation"/>
    <property type="evidence" value="ECO:0000315"/>
    <property type="project" value="UniProtKB"/>
</dbReference>
<dbReference type="GO" id="GO:0000272">
    <property type="term" value="P:polysaccharide catabolic process"/>
    <property type="evidence" value="ECO:0007669"/>
    <property type="project" value="UniProtKB-KW"/>
</dbReference>
<dbReference type="CDD" id="cd02879">
    <property type="entry name" value="GH18_plant_chitinase_class_V"/>
    <property type="match status" value="1"/>
</dbReference>
<dbReference type="FunFam" id="3.10.50.10:FF:000003">
    <property type="entry name" value="Class V chitinase CHIT5b"/>
    <property type="match status" value="1"/>
</dbReference>
<dbReference type="Gene3D" id="3.10.50.10">
    <property type="match status" value="1"/>
</dbReference>
<dbReference type="Gene3D" id="3.20.20.80">
    <property type="entry name" value="Glycosidases"/>
    <property type="match status" value="1"/>
</dbReference>
<dbReference type="InterPro" id="IPR011583">
    <property type="entry name" value="Chitinase_II/V-like_cat"/>
</dbReference>
<dbReference type="InterPro" id="IPR029070">
    <property type="entry name" value="Chitinase_insertion_sf"/>
</dbReference>
<dbReference type="InterPro" id="IPR001223">
    <property type="entry name" value="Glyco_hydro18_cat"/>
</dbReference>
<dbReference type="InterPro" id="IPR001579">
    <property type="entry name" value="Glyco_hydro_18_chit_AS"/>
</dbReference>
<dbReference type="InterPro" id="IPR017853">
    <property type="entry name" value="Glycoside_hydrolase_SF"/>
</dbReference>
<dbReference type="InterPro" id="IPR050314">
    <property type="entry name" value="Glycosyl_Hydrlase_18"/>
</dbReference>
<dbReference type="PANTHER" id="PTHR11177">
    <property type="entry name" value="CHITINASE"/>
    <property type="match status" value="1"/>
</dbReference>
<dbReference type="PANTHER" id="PTHR11177:SF317">
    <property type="entry name" value="CHITINASE 12-RELATED"/>
    <property type="match status" value="1"/>
</dbReference>
<dbReference type="Pfam" id="PF00704">
    <property type="entry name" value="Glyco_hydro_18"/>
    <property type="match status" value="1"/>
</dbReference>
<dbReference type="SMART" id="SM00636">
    <property type="entry name" value="Glyco_18"/>
    <property type="match status" value="1"/>
</dbReference>
<dbReference type="SUPFAM" id="SSF51445">
    <property type="entry name" value="(Trans)glycosidases"/>
    <property type="match status" value="1"/>
</dbReference>
<dbReference type="SUPFAM" id="SSF54556">
    <property type="entry name" value="Chitinase insertion domain"/>
    <property type="match status" value="1"/>
</dbReference>
<dbReference type="PROSITE" id="PS01095">
    <property type="entry name" value="GH18_1"/>
    <property type="match status" value="1"/>
</dbReference>
<dbReference type="PROSITE" id="PS51910">
    <property type="entry name" value="GH18_2"/>
    <property type="match status" value="1"/>
</dbReference>
<comment type="function">
    <text evidence="5 6">Possesses chitinase activity in vitro toward glycol chitin, carboxymethyl-chitin, colloidal chitin, and the chitin oligosaccharides (N-acetylglucosamine) (GlcNAc)6 and (GlcNAc)5 (PubMed:27383628). Hydrolyzes (GlcNAc)6 into (GlcNAc)4 and (GlcNAc)2, or two (GlcNAc)3 molecules (PubMed:27383628). Has the capacity to inhibit hyphal growth of the fungus Trichoderma viride in an agar-plate bioassay (PubMed:27383628). Involved in symbiotic signaling (PubMed:30284535). Required for root hair infection threads (ITs) elongation and nodule development (PubMed:30284535). Possesses Nod factor (NF) hydrolase activity (PubMed:30284535). NFs are lipo-chitooligosaccharide signaling molecules produced by nitrogen-fixing rhizobia to initiate nodulation (symbiosis) on the roots of legumes (PubMed:30284535). Modulates NF levels and signaling to complete transition of infected nodules to functional nitrogen-fixing organs (PubMed:30284535).</text>
</comment>
<comment type="catalytic activity">
    <reaction evidence="4 5">
        <text>Random endo-hydrolysis of N-acetyl-beta-D-glucosaminide (1-&gt;4)-beta-linkages in chitin and chitodextrins.</text>
        <dbReference type="EC" id="3.2.1.14"/>
    </reaction>
</comment>
<comment type="pathway">
    <text evidence="8">Glycan degradation; chitin degradation.</text>
</comment>
<comment type="induction">
    <text evidence="5">Induced by the fungal pathogen Fusarium oxysporum.</text>
</comment>
<comment type="disruption phenotype">
    <text evidence="6">Root nodule development arrested at the primordia stage and defect in nitrogen-fixing symbiosis in presence of Mesorhizobium loti.</text>
</comment>
<comment type="similarity">
    <text evidence="8">Belongs to the glycosyl hydrolase 18 family. Chitinase class V subfamily.</text>
</comment>
<gene>
    <name evidence="7" type="primary">CHIT5</name>
</gene>
<organism>
    <name type="scientific">Lotus japonicus</name>
    <name type="common">Lotus corniculatus var. japonicus</name>
    <dbReference type="NCBI Taxonomy" id="34305"/>
    <lineage>
        <taxon>Eukaryota</taxon>
        <taxon>Viridiplantae</taxon>
        <taxon>Streptophyta</taxon>
        <taxon>Embryophyta</taxon>
        <taxon>Tracheophyta</taxon>
        <taxon>Spermatophyta</taxon>
        <taxon>Magnoliopsida</taxon>
        <taxon>eudicotyledons</taxon>
        <taxon>Gunneridae</taxon>
        <taxon>Pentapetalae</taxon>
        <taxon>rosids</taxon>
        <taxon>fabids</taxon>
        <taxon>Fabales</taxon>
        <taxon>Fabaceae</taxon>
        <taxon>Papilionoideae</taxon>
        <taxon>50 kb inversion clade</taxon>
        <taxon>NPAAA clade</taxon>
        <taxon>Hologalegina</taxon>
        <taxon>robinioid clade</taxon>
        <taxon>Loteae</taxon>
        <taxon>Lotus</taxon>
    </lineage>
</organism>
<proteinExistence type="evidence at protein level"/>
<evidence type="ECO:0000255" key="1"/>
<evidence type="ECO:0000255" key="2">
    <source>
        <dbReference type="PROSITE-ProRule" id="PRU00498"/>
    </source>
</evidence>
<evidence type="ECO:0000255" key="3">
    <source>
        <dbReference type="PROSITE-ProRule" id="PRU01258"/>
    </source>
</evidence>
<evidence type="ECO:0000255" key="4">
    <source>
        <dbReference type="PROSITE-ProRule" id="PRU10053"/>
    </source>
</evidence>
<evidence type="ECO:0000269" key="5">
    <source>
    </source>
</evidence>
<evidence type="ECO:0000269" key="6">
    <source>
    </source>
</evidence>
<evidence type="ECO:0000303" key="7">
    <source>
    </source>
</evidence>
<evidence type="ECO:0000305" key="8"/>
<feature type="signal peptide" evidence="1">
    <location>
        <begin position="1"/>
        <end position="18"/>
    </location>
</feature>
<feature type="chain" id="PRO_0000445936" description="Class V chitinase CHIT5">
    <location>
        <begin position="19"/>
        <end position="397"/>
    </location>
</feature>
<feature type="domain" description="GH18" evidence="3">
    <location>
        <begin position="54"/>
        <end position="397"/>
    </location>
</feature>
<feature type="active site" description="Proton donor" evidence="3">
    <location>
        <position position="166"/>
    </location>
</feature>
<feature type="glycosylation site" description="N-linked (GlcNAc...) asparagine" evidence="2">
    <location>
        <position position="128"/>
    </location>
</feature>
<feature type="glycosylation site" description="N-linked (GlcNAc...) asparagine" evidence="2">
    <location>
        <position position="147"/>
    </location>
</feature>
<feature type="glycosylation site" description="N-linked (GlcNAc...) asparagine" evidence="2">
    <location>
        <position position="193"/>
    </location>
</feature>
<feature type="glycosylation site" description="N-linked (GlcNAc...) asparagine" evidence="2">
    <location>
        <position position="209"/>
    </location>
</feature>
<feature type="glycosylation site" description="N-linked (GlcNAc...) asparagine" evidence="2">
    <location>
        <position position="247"/>
    </location>
</feature>
<feature type="glycosylation site" description="N-linked (GlcNAc...) asparagine" evidence="2">
    <location>
        <position position="261"/>
    </location>
</feature>
<feature type="mutagenesis site" description="Root nodule development arrested at the primordia stage and defect in nitrogen-fixing symbiosis in presence of Mesorhizobium loti." evidence="6">
    <original>E</original>
    <variation>K</variation>
    <location>
        <position position="166"/>
    </location>
</feature>
<feature type="mutagenesis site" description="In chit5-2; Root nodule development arrested at the primordia stage and defect in nitrogen-fixing symbiosis in presence of Mesorhizobium loti." evidence="6">
    <original>P</original>
    <variation>L</variation>
    <location>
        <position position="168"/>
    </location>
</feature>
<name>CHIT5_LOTJA</name>
<keyword id="KW-0119">Carbohydrate metabolism</keyword>
<keyword id="KW-0146">Chitin degradation</keyword>
<keyword id="KW-0325">Glycoprotein</keyword>
<keyword id="KW-0326">Glycosidase</keyword>
<keyword id="KW-0378">Hydrolase</keyword>
<keyword id="KW-0536">Nodulation</keyword>
<keyword id="KW-0611">Plant defense</keyword>
<keyword id="KW-0624">Polysaccharide degradation</keyword>
<keyword id="KW-0732">Signal</keyword>
<sequence>MIIKLLVALIHYLHETMAVQSIITTPLLVILMSLRSYAFTEPSLHRQQPPSKGGVRAAYWPAWSDFSTSSIDTNYFTHIYYAFVQPAPESFNLEITESYKKWAPKYDGIHNIRPRVTTLLSIGGGGNNATLFSEMASSKQNRASFINSTIHVARKHEFNGLDLDWEWPGDEKDMSNLALLLKEWYKALVVEANTSRKSRLLLTSAVYFNSTISLIGNGPRSYPVRAIRKYLDWASPMCFDYNGAWANETGFNAALYDPNSNISTKYGIGSWIGSGVPAEKLVMGLPLYGRAWELKDPNDHGVGAKAVGPAVDTDGSMDYDEILVFNKDTGAKVVYDEVAVSFYSYSGTTWIGYDDGPSITKKVQFARSMGLKGYFFWAIGKDKDWTISKQASNAWGY</sequence>
<protein>
    <recommendedName>
        <fullName evidence="7">Class V chitinase CHIT5</fullName>
        <shortName evidence="7">LjCHIT5</shortName>
        <ecNumber evidence="5">3.2.1.14</ecNumber>
    </recommendedName>
</protein>